<dbReference type="EMBL" id="DQ440314">
    <property type="protein sequence ID" value="ABF18347.1"/>
    <property type="molecule type" value="mRNA"/>
</dbReference>
<dbReference type="EMBL" id="CH477485">
    <property type="protein sequence ID" value="EAT40153.1"/>
    <property type="status" value="ALT_INIT"/>
    <property type="molecule type" value="Genomic_DNA"/>
</dbReference>
<dbReference type="EMBL" id="CH478081">
    <property type="protein sequence ID" value="EAT34042.1"/>
    <property type="molecule type" value="Genomic_DNA"/>
</dbReference>
<dbReference type="RefSeq" id="XP_001653087.1">
    <property type="nucleotide sequence ID" value="XM_001653037.1"/>
</dbReference>
<dbReference type="RefSeq" id="XP_001663866.1">
    <property type="nucleotide sequence ID" value="XM_001663816.1"/>
</dbReference>
<dbReference type="SMR" id="Q16ZR8"/>
<dbReference type="FunCoup" id="Q16ZR8">
    <property type="interactions" value="1258"/>
</dbReference>
<dbReference type="STRING" id="7159.Q16ZR8"/>
<dbReference type="PaxDb" id="7159-AAEL008083-PA"/>
<dbReference type="GeneID" id="5570108"/>
<dbReference type="KEGG" id="aag:5570108"/>
<dbReference type="CTD" id="104044"/>
<dbReference type="VEuPathDB" id="VectorBase:AAEL020238"/>
<dbReference type="eggNOG" id="KOG0830">
    <property type="taxonomic scope" value="Eukaryota"/>
</dbReference>
<dbReference type="HOGENOM" id="CLU_058171_0_1_1"/>
<dbReference type="InParanoid" id="Q16ZR8"/>
<dbReference type="OrthoDB" id="414863at2759"/>
<dbReference type="PhylomeDB" id="Q16ZR8"/>
<dbReference type="Proteomes" id="UP000008820">
    <property type="component" value="Unassembled WGS sequence"/>
</dbReference>
<dbReference type="Proteomes" id="UP000682892">
    <property type="component" value="Unassembled WGS sequence"/>
</dbReference>
<dbReference type="GO" id="GO:0022627">
    <property type="term" value="C:cytosolic small ribosomal subunit"/>
    <property type="evidence" value="ECO:0007669"/>
    <property type="project" value="UniProtKB-UniRule"/>
</dbReference>
<dbReference type="GO" id="GO:0003735">
    <property type="term" value="F:structural constituent of ribosome"/>
    <property type="evidence" value="ECO:0007669"/>
    <property type="project" value="UniProtKB-UniRule"/>
</dbReference>
<dbReference type="GO" id="GO:0000028">
    <property type="term" value="P:ribosomal small subunit assembly"/>
    <property type="evidence" value="ECO:0007669"/>
    <property type="project" value="UniProtKB-UniRule"/>
</dbReference>
<dbReference type="GO" id="GO:0006412">
    <property type="term" value="P:translation"/>
    <property type="evidence" value="ECO:0007669"/>
    <property type="project" value="UniProtKB-UniRule"/>
</dbReference>
<dbReference type="CDD" id="cd01425">
    <property type="entry name" value="RPS2"/>
    <property type="match status" value="1"/>
</dbReference>
<dbReference type="FunFam" id="3.40.50.10490:FF:000012">
    <property type="entry name" value="40S ribosomal protein SA"/>
    <property type="match status" value="1"/>
</dbReference>
<dbReference type="Gene3D" id="3.40.50.10490">
    <property type="entry name" value="Glucose-6-phosphate isomerase like protein, domain 1"/>
    <property type="match status" value="1"/>
</dbReference>
<dbReference type="HAMAP" id="MF_03015">
    <property type="entry name" value="Ribosomal_S2_euk"/>
    <property type="match status" value="1"/>
</dbReference>
<dbReference type="InterPro" id="IPR001865">
    <property type="entry name" value="Ribosomal_uS2"/>
</dbReference>
<dbReference type="InterPro" id="IPR032281">
    <property type="entry name" value="Ribosomal_uS2_C"/>
</dbReference>
<dbReference type="InterPro" id="IPR018130">
    <property type="entry name" value="Ribosomal_uS2_CS"/>
</dbReference>
<dbReference type="InterPro" id="IPR027498">
    <property type="entry name" value="Ribosomal_uS2_euk"/>
</dbReference>
<dbReference type="InterPro" id="IPR005707">
    <property type="entry name" value="Ribosomal_uS2_euk/arc"/>
</dbReference>
<dbReference type="InterPro" id="IPR023591">
    <property type="entry name" value="Ribosomal_uS2_flav_dom_sf"/>
</dbReference>
<dbReference type="NCBIfam" id="TIGR01012">
    <property type="entry name" value="uS2_euk_arch"/>
    <property type="match status" value="1"/>
</dbReference>
<dbReference type="PANTHER" id="PTHR11489">
    <property type="entry name" value="40S RIBOSOMAL PROTEIN SA"/>
    <property type="match status" value="1"/>
</dbReference>
<dbReference type="Pfam" id="PF16122">
    <property type="entry name" value="40S_SA_C"/>
    <property type="match status" value="1"/>
</dbReference>
<dbReference type="Pfam" id="PF00318">
    <property type="entry name" value="Ribosomal_S2"/>
    <property type="match status" value="2"/>
</dbReference>
<dbReference type="PRINTS" id="PR00395">
    <property type="entry name" value="RIBOSOMALS2"/>
</dbReference>
<dbReference type="SUPFAM" id="SSF52313">
    <property type="entry name" value="Ribosomal protein S2"/>
    <property type="match status" value="1"/>
</dbReference>
<dbReference type="PROSITE" id="PS00962">
    <property type="entry name" value="RIBOSOMAL_S2_1"/>
    <property type="match status" value="1"/>
</dbReference>
<dbReference type="PROSITE" id="PS00963">
    <property type="entry name" value="RIBOSOMAL_S2_2"/>
    <property type="match status" value="1"/>
</dbReference>
<reference key="1">
    <citation type="journal article" date="2007" name="BMC Genomics">
        <title>An annotated catalogue of salivary gland transcripts in the adult female mosquito, Aedes aegypti.</title>
        <authorList>
            <person name="Ribeiro J.M.C."/>
            <person name="Arca B."/>
            <person name="Lombardo F."/>
            <person name="Calvo E."/>
            <person name="Phan V.M."/>
            <person name="Chandra P.K."/>
            <person name="Wikel S.K."/>
        </authorList>
    </citation>
    <scope>NUCLEOTIDE SEQUENCE [LARGE SCALE MRNA] (AAEL008083)</scope>
    <source>
        <strain>Black-eyed Liverpool</strain>
        <tissue>Salivary gland</tissue>
    </source>
</reference>
<reference key="2">
    <citation type="journal article" date="2007" name="Science">
        <title>Genome sequence of Aedes aegypti, a major arbovirus vector.</title>
        <authorList>
            <person name="Nene V."/>
            <person name="Wortman J.R."/>
            <person name="Lawson D."/>
            <person name="Haas B.J."/>
            <person name="Kodira C.D."/>
            <person name="Tu Z.J."/>
            <person name="Loftus B.J."/>
            <person name="Xi Z."/>
            <person name="Megy K."/>
            <person name="Grabherr M."/>
            <person name="Ren Q."/>
            <person name="Zdobnov E.M."/>
            <person name="Lobo N.F."/>
            <person name="Campbell K.S."/>
            <person name="Brown S.E."/>
            <person name="Bonaldo M.F."/>
            <person name="Zhu J."/>
            <person name="Sinkins S.P."/>
            <person name="Hogenkamp D.G."/>
            <person name="Amedeo P."/>
            <person name="Arensburger P."/>
            <person name="Atkinson P.W."/>
            <person name="Bidwell S.L."/>
            <person name="Biedler J."/>
            <person name="Birney E."/>
            <person name="Bruggner R.V."/>
            <person name="Costas J."/>
            <person name="Coy M.R."/>
            <person name="Crabtree J."/>
            <person name="Crawford M."/>
            <person name="DeBruyn B."/>
            <person name="DeCaprio D."/>
            <person name="Eiglmeier K."/>
            <person name="Eisenstadt E."/>
            <person name="El-Dorry H."/>
            <person name="Gelbart W.M."/>
            <person name="Gomes S.L."/>
            <person name="Hammond M."/>
            <person name="Hannick L.I."/>
            <person name="Hogan J.R."/>
            <person name="Holmes M.H."/>
            <person name="Jaffe D."/>
            <person name="Johnston S.J."/>
            <person name="Kennedy R.C."/>
            <person name="Koo H."/>
            <person name="Kravitz S."/>
            <person name="Kriventseva E.V."/>
            <person name="Kulp D."/>
            <person name="Labutti K."/>
            <person name="Lee E."/>
            <person name="Li S."/>
            <person name="Lovin D.D."/>
            <person name="Mao C."/>
            <person name="Mauceli E."/>
            <person name="Menck C.F."/>
            <person name="Miller J.R."/>
            <person name="Montgomery P."/>
            <person name="Mori A."/>
            <person name="Nascimento A.L."/>
            <person name="Naveira H.F."/>
            <person name="Nusbaum C."/>
            <person name="O'Leary S.B."/>
            <person name="Orvis J."/>
            <person name="Pertea M."/>
            <person name="Quesneville H."/>
            <person name="Reidenbach K.R."/>
            <person name="Rogers Y.-H.C."/>
            <person name="Roth C.W."/>
            <person name="Schneider J.R."/>
            <person name="Schatz M."/>
            <person name="Shumway M."/>
            <person name="Stanke M."/>
            <person name="Stinson E.O."/>
            <person name="Tubio J.M.C."/>
            <person name="Vanzee J.P."/>
            <person name="Verjovski-Almeida S."/>
            <person name="Werner D."/>
            <person name="White O.R."/>
            <person name="Wyder S."/>
            <person name="Zeng Q."/>
            <person name="Zhao Q."/>
            <person name="Zhao Y."/>
            <person name="Hill C.A."/>
            <person name="Raikhel A.S."/>
            <person name="Soares M.B."/>
            <person name="Knudson D.L."/>
            <person name="Lee N.H."/>
            <person name="Galagan J."/>
            <person name="Salzberg S.L."/>
            <person name="Paulsen I.T."/>
            <person name="Dimopoulos G."/>
            <person name="Collins F.H."/>
            <person name="Bruce B."/>
            <person name="Fraser-Liggett C.M."/>
            <person name="Severson D.W."/>
        </authorList>
    </citation>
    <scope>NUCLEOTIDE SEQUENCE [LARGE SCALE GENOMIC DNA]</scope>
    <source>
        <strain>LVPib12</strain>
    </source>
</reference>
<name>RSSA_AEDAE</name>
<proteinExistence type="evidence at transcript level"/>
<evidence type="ECO:0000255" key="1">
    <source>
        <dbReference type="HAMAP-Rule" id="MF_03015"/>
    </source>
</evidence>
<evidence type="ECO:0000305" key="2"/>
<keyword id="KW-0963">Cytoplasm</keyword>
<keyword id="KW-1185">Reference proteome</keyword>
<keyword id="KW-0687">Ribonucleoprotein</keyword>
<keyword id="KW-0689">Ribosomal protein</keyword>
<organism>
    <name type="scientific">Aedes aegypti</name>
    <name type="common">Yellowfever mosquito</name>
    <name type="synonym">Culex aegypti</name>
    <dbReference type="NCBI Taxonomy" id="7159"/>
    <lineage>
        <taxon>Eukaryota</taxon>
        <taxon>Metazoa</taxon>
        <taxon>Ecdysozoa</taxon>
        <taxon>Arthropoda</taxon>
        <taxon>Hexapoda</taxon>
        <taxon>Insecta</taxon>
        <taxon>Pterygota</taxon>
        <taxon>Neoptera</taxon>
        <taxon>Endopterygota</taxon>
        <taxon>Diptera</taxon>
        <taxon>Nematocera</taxon>
        <taxon>Culicoidea</taxon>
        <taxon>Culicidae</taxon>
        <taxon>Culicinae</taxon>
        <taxon>Aedini</taxon>
        <taxon>Aedes</taxon>
        <taxon>Stegomyia</taxon>
    </lineage>
</organism>
<comment type="function">
    <text evidence="1">Required for the assembly and/or stability of the 40S ribosomal subunit. Required for the processing of the 20S rRNA-precursor to mature 18S rRNA in a late step of the maturation of 40S ribosomal subunits.</text>
</comment>
<comment type="subunit">
    <text evidence="1">Component of the small ribosomal subunit. Mature ribosomes consist of a small (40S) and a large (60S) subunit. The 40S subunit contains about 33 different proteins and 1 molecule of RNA (18S). The 60S subunit contains about 49 different proteins and 3 molecules of RNA (28S, 5.8S and 5S). Interacts with ribosomal protein S21.</text>
</comment>
<comment type="subcellular location">
    <subcellularLocation>
        <location evidence="1">Cytoplasm</location>
    </subcellularLocation>
</comment>
<comment type="similarity">
    <text evidence="1">Belongs to the universal ribosomal protein uS2 family.</text>
</comment>
<comment type="sequence caution" evidence="2">
    <conflict type="erroneous initiation">
        <sequence resource="EMBL-CDS" id="EAT40153"/>
    </conflict>
</comment>
<feature type="initiator methionine" description="Removed" evidence="1">
    <location>
        <position position="1"/>
    </location>
</feature>
<feature type="chain" id="PRO_0000371575" description="Small ribosomal subunit protein uS2">
    <location>
        <begin position="2"/>
        <end position="288"/>
    </location>
</feature>
<protein>
    <recommendedName>
        <fullName evidence="1">Small ribosomal subunit protein uS2</fullName>
    </recommendedName>
    <alternativeName>
        <fullName evidence="2">40S ribosomal protein SA</fullName>
    </alternativeName>
</protein>
<sequence>MSGNLDILALKDDDVTKMLAATTHVGSTSVNFQMESYVYKRRPDGVHIINLGRTWEKLLLAARCIASIEYPGEVFAISSRPYGQRAVLKFAHYTEATPTAGRFTPGAFTNQIQPAFREPRLLIVTDPLTDHQPVTEASYVNIPVIAFCNTDSPLKFVDIAIPCNNKSPHSIGLMWWLLAREVLRLRGKITHDKWDIKPDLFFYRDPEEAEKEQAALEAAPAAKDLYPEEPIVVDETNWAGEDAALPAVAAAPAAVAAAPAALPQLVQADDWNEDETQTAGSWGGGGGF</sequence>
<gene>
    <name type="ORF">AAEL008083</name>
</gene>
<gene>
    <name type="ORF">AAEL013694</name>
</gene>
<accession>Q16ZR8</accession>
<accession>Q1HQY0</accession>